<evidence type="ECO:0000255" key="1">
    <source>
        <dbReference type="HAMAP-Rule" id="MF_01401"/>
    </source>
</evidence>
<reference key="1">
    <citation type="journal article" date="2005" name="Infect. Immun.">
        <title>Whole-genome analyses of speciation events in pathogenic Brucellae.</title>
        <authorList>
            <person name="Chain P.S."/>
            <person name="Comerci D.J."/>
            <person name="Tolmasky M.E."/>
            <person name="Larimer F.W."/>
            <person name="Malfatti S.A."/>
            <person name="Vergez L.M."/>
            <person name="Aguero F."/>
            <person name="Land M.L."/>
            <person name="Ugalde R.A."/>
            <person name="Garcia E."/>
        </authorList>
    </citation>
    <scope>NUCLEOTIDE SEQUENCE [LARGE SCALE GENOMIC DNA]</scope>
    <source>
        <strain>2308</strain>
    </source>
</reference>
<accession>Q2YJM1</accession>
<organism>
    <name type="scientific">Brucella abortus (strain 2308)</name>
    <dbReference type="NCBI Taxonomy" id="359391"/>
    <lineage>
        <taxon>Bacteria</taxon>
        <taxon>Pseudomonadati</taxon>
        <taxon>Pseudomonadota</taxon>
        <taxon>Alphaproteobacteria</taxon>
        <taxon>Hyphomicrobiales</taxon>
        <taxon>Brucellaceae</taxon>
        <taxon>Brucella/Ochrobactrum group</taxon>
        <taxon>Brucella</taxon>
    </lineage>
</organism>
<gene>
    <name evidence="1" type="primary">msrA</name>
    <name type="ordered locus">BAB2_1029</name>
</gene>
<dbReference type="EC" id="1.8.4.11" evidence="1"/>
<dbReference type="EMBL" id="AM040265">
    <property type="protein sequence ID" value="CAJ13195.1"/>
    <property type="molecule type" value="Genomic_DNA"/>
</dbReference>
<dbReference type="RefSeq" id="WP_002965585.1">
    <property type="nucleotide sequence ID" value="NZ_KN046823.1"/>
</dbReference>
<dbReference type="SMR" id="Q2YJM1"/>
<dbReference type="STRING" id="359391.BAB2_1029"/>
<dbReference type="GeneID" id="97534887"/>
<dbReference type="KEGG" id="bmf:BAB2_1029"/>
<dbReference type="PATRIC" id="fig|359391.11.peg.717"/>
<dbReference type="HOGENOM" id="CLU_031040_10_3_5"/>
<dbReference type="PhylomeDB" id="Q2YJM1"/>
<dbReference type="Proteomes" id="UP000002719">
    <property type="component" value="Chromosome II"/>
</dbReference>
<dbReference type="GO" id="GO:0005737">
    <property type="term" value="C:cytoplasm"/>
    <property type="evidence" value="ECO:0007669"/>
    <property type="project" value="TreeGrafter"/>
</dbReference>
<dbReference type="GO" id="GO:0036456">
    <property type="term" value="F:L-methionine-(S)-S-oxide reductase activity"/>
    <property type="evidence" value="ECO:0007669"/>
    <property type="project" value="TreeGrafter"/>
</dbReference>
<dbReference type="GO" id="GO:0008113">
    <property type="term" value="F:peptide-methionine (S)-S-oxide reductase activity"/>
    <property type="evidence" value="ECO:0007669"/>
    <property type="project" value="UniProtKB-UniRule"/>
</dbReference>
<dbReference type="GO" id="GO:0034599">
    <property type="term" value="P:cellular response to oxidative stress"/>
    <property type="evidence" value="ECO:0007669"/>
    <property type="project" value="TreeGrafter"/>
</dbReference>
<dbReference type="GO" id="GO:0036211">
    <property type="term" value="P:protein modification process"/>
    <property type="evidence" value="ECO:0007669"/>
    <property type="project" value="UniProtKB-UniRule"/>
</dbReference>
<dbReference type="FunFam" id="3.30.1060.10:FF:000001">
    <property type="entry name" value="Peptide methionine sulfoxide reductase MsrA"/>
    <property type="match status" value="1"/>
</dbReference>
<dbReference type="Gene3D" id="3.30.1060.10">
    <property type="entry name" value="Peptide methionine sulphoxide reductase MsrA"/>
    <property type="match status" value="1"/>
</dbReference>
<dbReference type="HAMAP" id="MF_01401">
    <property type="entry name" value="MsrA"/>
    <property type="match status" value="1"/>
</dbReference>
<dbReference type="InterPro" id="IPR002569">
    <property type="entry name" value="Met_Sox_Rdtase_MsrA_dom"/>
</dbReference>
<dbReference type="InterPro" id="IPR036509">
    <property type="entry name" value="Met_Sox_Rdtase_MsrA_sf"/>
</dbReference>
<dbReference type="InterPro" id="IPR050162">
    <property type="entry name" value="MsrA_MetSO_reductase"/>
</dbReference>
<dbReference type="NCBIfam" id="TIGR00401">
    <property type="entry name" value="msrA"/>
    <property type="match status" value="1"/>
</dbReference>
<dbReference type="PANTHER" id="PTHR42799">
    <property type="entry name" value="MITOCHONDRIAL PEPTIDE METHIONINE SULFOXIDE REDUCTASE"/>
    <property type="match status" value="1"/>
</dbReference>
<dbReference type="PANTHER" id="PTHR42799:SF2">
    <property type="entry name" value="MITOCHONDRIAL PEPTIDE METHIONINE SULFOXIDE REDUCTASE"/>
    <property type="match status" value="1"/>
</dbReference>
<dbReference type="Pfam" id="PF01625">
    <property type="entry name" value="PMSR"/>
    <property type="match status" value="1"/>
</dbReference>
<dbReference type="SUPFAM" id="SSF55068">
    <property type="entry name" value="Peptide methionine sulfoxide reductase"/>
    <property type="match status" value="1"/>
</dbReference>
<comment type="function">
    <text evidence="1">Has an important function as a repair enzyme for proteins that have been inactivated by oxidation. Catalyzes the reversible oxidation-reduction of methionine sulfoxide in proteins to methionine.</text>
</comment>
<comment type="catalytic activity">
    <reaction evidence="1">
        <text>L-methionyl-[protein] + [thioredoxin]-disulfide + H2O = L-methionyl-(S)-S-oxide-[protein] + [thioredoxin]-dithiol</text>
        <dbReference type="Rhea" id="RHEA:14217"/>
        <dbReference type="Rhea" id="RHEA-COMP:10698"/>
        <dbReference type="Rhea" id="RHEA-COMP:10700"/>
        <dbReference type="Rhea" id="RHEA-COMP:12313"/>
        <dbReference type="Rhea" id="RHEA-COMP:12315"/>
        <dbReference type="ChEBI" id="CHEBI:15377"/>
        <dbReference type="ChEBI" id="CHEBI:16044"/>
        <dbReference type="ChEBI" id="CHEBI:29950"/>
        <dbReference type="ChEBI" id="CHEBI:44120"/>
        <dbReference type="ChEBI" id="CHEBI:50058"/>
        <dbReference type="EC" id="1.8.4.11"/>
    </reaction>
</comment>
<comment type="catalytic activity">
    <reaction evidence="1">
        <text>[thioredoxin]-disulfide + L-methionine + H2O = L-methionine (S)-S-oxide + [thioredoxin]-dithiol</text>
        <dbReference type="Rhea" id="RHEA:19993"/>
        <dbReference type="Rhea" id="RHEA-COMP:10698"/>
        <dbReference type="Rhea" id="RHEA-COMP:10700"/>
        <dbReference type="ChEBI" id="CHEBI:15377"/>
        <dbReference type="ChEBI" id="CHEBI:29950"/>
        <dbReference type="ChEBI" id="CHEBI:50058"/>
        <dbReference type="ChEBI" id="CHEBI:57844"/>
        <dbReference type="ChEBI" id="CHEBI:58772"/>
        <dbReference type="EC" id="1.8.4.11"/>
    </reaction>
</comment>
<comment type="similarity">
    <text evidence="1">Belongs to the MsrA Met sulfoxide reductase family.</text>
</comment>
<name>MSRA_BRUA2</name>
<protein>
    <recommendedName>
        <fullName evidence="1">Peptide methionine sulfoxide reductase MsrA</fullName>
        <shortName evidence="1">Protein-methionine-S-oxide reductase</shortName>
        <ecNumber evidence="1">1.8.4.11</ecNumber>
    </recommendedName>
    <alternativeName>
        <fullName evidence="1">Peptide-methionine (S)-S-oxide reductase</fullName>
        <shortName evidence="1">Peptide Met(O) reductase</shortName>
    </alternativeName>
</protein>
<feature type="chain" id="PRO_1000068312" description="Peptide methionine sulfoxide reductase MsrA">
    <location>
        <begin position="1"/>
        <end position="218"/>
    </location>
</feature>
<feature type="active site" evidence="1">
    <location>
        <position position="57"/>
    </location>
</feature>
<sequence>MSFFDSYRKKMQMPSKEEVLPGRVQPIPTAAAHFVSGHPLKGPWPDGMKQVLFGMGCFWGAERLFWQVPGVYVTAVGYAGGITPNPTYEETCTGLTGHAEVVLVVYDPKVVTLNELLALFWEEHDPTQGMRQGNDIGTTYRSVIYTFNAVDRAVAEKSRDAYSQALASRGLGPVTTQIADAPDFYYAEDYHQQYLAKNPDGYCGLRGTGVSCPIPLAH</sequence>
<proteinExistence type="inferred from homology"/>
<keyword id="KW-0560">Oxidoreductase</keyword>
<keyword id="KW-1185">Reference proteome</keyword>